<comment type="function">
    <text evidence="1">Member of the eIF2 complex that functions in the early steps of protein synthesis by forming a ternary complex with GTP and initiator tRNA. This complex binds to a 40S ribosomal subunit, followed by mRNA binding to form the 43S pre-initiation complex (43S PIC). Junction of the 60S ribosomal subunit to form the 80S initiation complex is preceded by hydrolysis of the GTP bound to eIF2 and release of an eIF2-GDP binary complex. In order for eIF2 to recycle and catalyze another round of initiation, the GDP bound to eIF2 must exchange with GTP by way of a reaction catalyzed by eIF-2B (By similarity).</text>
</comment>
<comment type="catalytic activity">
    <reaction evidence="2">
        <text>GTP + H2O = GDP + phosphate + H(+)</text>
        <dbReference type="Rhea" id="RHEA:19669"/>
        <dbReference type="ChEBI" id="CHEBI:15377"/>
        <dbReference type="ChEBI" id="CHEBI:15378"/>
        <dbReference type="ChEBI" id="CHEBI:37565"/>
        <dbReference type="ChEBI" id="CHEBI:43474"/>
        <dbReference type="ChEBI" id="CHEBI:58189"/>
        <dbReference type="EC" id="3.6.5.3"/>
    </reaction>
</comment>
<comment type="subunit">
    <text evidence="3">Eukaryotic translation initiation factor 2 eIF2 is a heterotrimeric complex composed of an alpha (EIF2S1), a beta (EIF2S2) and a gamma (EIF2S3) chain. eIF2 is member of the 43S pre-initiation complex (43S PIC). Interacts (via C-terminus) with CDC123; the interaction is direct.</text>
</comment>
<comment type="subcellular location">
    <subcellularLocation>
        <location evidence="4">Cytoplasm</location>
        <location evidence="4">Cytosol</location>
    </subcellularLocation>
</comment>
<comment type="similarity">
    <text evidence="6">Belongs to the TRAFAC class translation factor GTPase superfamily. Classic translation factor GTPase family. EIF2G subfamily.</text>
</comment>
<organism>
    <name type="scientific">Pongo abelii</name>
    <name type="common">Sumatran orangutan</name>
    <name type="synonym">Pongo pygmaeus abelii</name>
    <dbReference type="NCBI Taxonomy" id="9601"/>
    <lineage>
        <taxon>Eukaryota</taxon>
        <taxon>Metazoa</taxon>
        <taxon>Chordata</taxon>
        <taxon>Craniata</taxon>
        <taxon>Vertebrata</taxon>
        <taxon>Euteleostomi</taxon>
        <taxon>Mammalia</taxon>
        <taxon>Eutheria</taxon>
        <taxon>Euarchontoglires</taxon>
        <taxon>Primates</taxon>
        <taxon>Haplorrhini</taxon>
        <taxon>Catarrhini</taxon>
        <taxon>Hominidae</taxon>
        <taxon>Pongo</taxon>
    </lineage>
</organism>
<name>IF2G_PONAB</name>
<proteinExistence type="evidence at transcript level"/>
<dbReference type="EC" id="3.6.5.3" evidence="2"/>
<dbReference type="EMBL" id="CR860221">
    <property type="protein sequence ID" value="CAH92363.1"/>
    <property type="molecule type" value="mRNA"/>
</dbReference>
<dbReference type="SMR" id="Q5R797"/>
<dbReference type="STRING" id="9601.ENSPPYP00000022595"/>
<dbReference type="eggNOG" id="KOG0466">
    <property type="taxonomic scope" value="Eukaryota"/>
</dbReference>
<dbReference type="InParanoid" id="Q5R797"/>
<dbReference type="Proteomes" id="UP000001595">
    <property type="component" value="Unplaced"/>
</dbReference>
<dbReference type="GO" id="GO:0005829">
    <property type="term" value="C:cytosol"/>
    <property type="evidence" value="ECO:0007669"/>
    <property type="project" value="UniProtKB-SubCell"/>
</dbReference>
<dbReference type="GO" id="GO:0005850">
    <property type="term" value="C:eukaryotic translation initiation factor 2 complex"/>
    <property type="evidence" value="ECO:0000250"/>
    <property type="project" value="UniProtKB"/>
</dbReference>
<dbReference type="GO" id="GO:0005525">
    <property type="term" value="F:GTP binding"/>
    <property type="evidence" value="ECO:0007669"/>
    <property type="project" value="UniProtKB-KW"/>
</dbReference>
<dbReference type="GO" id="GO:0003924">
    <property type="term" value="F:GTPase activity"/>
    <property type="evidence" value="ECO:0007669"/>
    <property type="project" value="InterPro"/>
</dbReference>
<dbReference type="GO" id="GO:1990856">
    <property type="term" value="F:methionyl-initiator methionine tRNA binding"/>
    <property type="evidence" value="ECO:0000250"/>
    <property type="project" value="UniProtKB"/>
</dbReference>
<dbReference type="GO" id="GO:0003743">
    <property type="term" value="F:translation initiation factor activity"/>
    <property type="evidence" value="ECO:0007669"/>
    <property type="project" value="UniProtKB-KW"/>
</dbReference>
<dbReference type="GO" id="GO:0002183">
    <property type="term" value="P:cytoplasmic translational initiation"/>
    <property type="evidence" value="ECO:0000250"/>
    <property type="project" value="UniProtKB"/>
</dbReference>
<dbReference type="GO" id="GO:0001731">
    <property type="term" value="P:formation of translation preinitiation complex"/>
    <property type="evidence" value="ECO:0007669"/>
    <property type="project" value="TreeGrafter"/>
</dbReference>
<dbReference type="CDD" id="cd01888">
    <property type="entry name" value="eIF2_gamma"/>
    <property type="match status" value="1"/>
</dbReference>
<dbReference type="CDD" id="cd03688">
    <property type="entry name" value="eIF2_gamma_II"/>
    <property type="match status" value="1"/>
</dbReference>
<dbReference type="CDD" id="cd15490">
    <property type="entry name" value="eIF2_gamma_III"/>
    <property type="match status" value="1"/>
</dbReference>
<dbReference type="FunFam" id="2.40.30.10:FF:000009">
    <property type="entry name" value="Eukaryotic translation initiation factor 2 subunit gamma"/>
    <property type="match status" value="1"/>
</dbReference>
<dbReference type="FunFam" id="2.40.30.10:FF:000011">
    <property type="entry name" value="Eukaryotic translation initiation factor 2 subunit gamma"/>
    <property type="match status" value="1"/>
</dbReference>
<dbReference type="FunFam" id="3.40.50.300:FF:000065">
    <property type="entry name" value="Eukaryotic translation initiation factor 2 subunit gamma"/>
    <property type="match status" value="1"/>
</dbReference>
<dbReference type="Gene3D" id="3.40.50.300">
    <property type="entry name" value="P-loop containing nucleotide triphosphate hydrolases"/>
    <property type="match status" value="1"/>
</dbReference>
<dbReference type="Gene3D" id="2.40.30.10">
    <property type="entry name" value="Translation factors"/>
    <property type="match status" value="2"/>
</dbReference>
<dbReference type="InterPro" id="IPR004161">
    <property type="entry name" value="EFTu-like_2"/>
</dbReference>
<dbReference type="InterPro" id="IPR050543">
    <property type="entry name" value="eIF2G"/>
</dbReference>
<dbReference type="InterPro" id="IPR015256">
    <property type="entry name" value="eIF2g_C"/>
</dbReference>
<dbReference type="InterPro" id="IPR044127">
    <property type="entry name" value="eIF2g_dom_2"/>
</dbReference>
<dbReference type="InterPro" id="IPR044128">
    <property type="entry name" value="eIF2g_GTP-bd"/>
</dbReference>
<dbReference type="InterPro" id="IPR027417">
    <property type="entry name" value="P-loop_NTPase"/>
</dbReference>
<dbReference type="InterPro" id="IPR000795">
    <property type="entry name" value="T_Tr_GTP-bd_dom"/>
</dbReference>
<dbReference type="InterPro" id="IPR009000">
    <property type="entry name" value="Transl_B-barrel_sf"/>
</dbReference>
<dbReference type="InterPro" id="IPR009001">
    <property type="entry name" value="Transl_elong_EF1A/Init_IF2_C"/>
</dbReference>
<dbReference type="NCBIfam" id="NF003077">
    <property type="entry name" value="PRK04000.1"/>
    <property type="match status" value="1"/>
</dbReference>
<dbReference type="PANTHER" id="PTHR42854">
    <property type="entry name" value="EUKARYOTIC TRANSLATION INITIATION FACTOR 2 SUBUNIT 3 FAMILY MEMBER"/>
    <property type="match status" value="1"/>
</dbReference>
<dbReference type="PANTHER" id="PTHR42854:SF3">
    <property type="entry name" value="EUKARYOTIC TRANSLATION INITIATION FACTOR 2 SUBUNIT 3-RELATED"/>
    <property type="match status" value="1"/>
</dbReference>
<dbReference type="Pfam" id="PF09173">
    <property type="entry name" value="eIF2_C"/>
    <property type="match status" value="1"/>
</dbReference>
<dbReference type="Pfam" id="PF00009">
    <property type="entry name" value="GTP_EFTU"/>
    <property type="match status" value="1"/>
</dbReference>
<dbReference type="Pfam" id="PF03144">
    <property type="entry name" value="GTP_EFTU_D2"/>
    <property type="match status" value="1"/>
</dbReference>
<dbReference type="PRINTS" id="PR00315">
    <property type="entry name" value="ELONGATNFCT"/>
</dbReference>
<dbReference type="SUPFAM" id="SSF50465">
    <property type="entry name" value="EF-Tu/eEF-1alpha/eIF2-gamma C-terminal domain"/>
    <property type="match status" value="1"/>
</dbReference>
<dbReference type="SUPFAM" id="SSF52540">
    <property type="entry name" value="P-loop containing nucleoside triphosphate hydrolases"/>
    <property type="match status" value="1"/>
</dbReference>
<dbReference type="SUPFAM" id="SSF50447">
    <property type="entry name" value="Translation proteins"/>
    <property type="match status" value="1"/>
</dbReference>
<dbReference type="PROSITE" id="PS51722">
    <property type="entry name" value="G_TR_2"/>
    <property type="match status" value="1"/>
</dbReference>
<sequence length="472" mass="51120">MAGGEAGVTLGQPHLSRQDLTTLDVTKLTPLSHEVISRQATINIGTIGHVAHGKSTVVKAISGVHTVRFKNELERNITIKLGYANAKIYKLDDPSCPRPECYRSCGSSTPDEFPTDIPGTKGNFKLVRHVSFVDCPGHDILMATMLNGAAVMDAALLLIAGNESCPQPQTSEHLAAIEIMKLKHILILQNKIDLVKESQAKEQYEQILAFVQGTVAEGAPIIPISAQLKYNIEVVCEYIVKKIPVPPRDFTSEPRLIVIRSFDVNKPGCEVDDLKGGVAGGSILKGVLKVGQEIEVRPGIVSKDSEGKLMCKPIFSKIVSLFAEHNDLQYAAPGGLIGVGTKIDPTLCRADRMVGQVLGAVGALPEIFTELEISYFLLRRLLGVRTEGDKKAAKVQKLSKNEVLMVNIGPLSTGGRVSAVKADLGKIVLTNPVCTEVGEKIALSRRVEKHWRLIGWGQIRRGVTIKPTVDDD</sequence>
<keyword id="KW-0007">Acetylation</keyword>
<keyword id="KW-0963">Cytoplasm</keyword>
<keyword id="KW-0342">GTP-binding</keyword>
<keyword id="KW-0378">Hydrolase</keyword>
<keyword id="KW-0396">Initiation factor</keyword>
<keyword id="KW-0547">Nucleotide-binding</keyword>
<keyword id="KW-0597">Phosphoprotein</keyword>
<keyword id="KW-0648">Protein biosynthesis</keyword>
<keyword id="KW-1185">Reference proteome</keyword>
<reference key="1">
    <citation type="submission" date="2004-11" db="EMBL/GenBank/DDBJ databases">
        <authorList>
            <consortium name="The German cDNA consortium"/>
        </authorList>
    </citation>
    <scope>NUCLEOTIDE SEQUENCE [LARGE SCALE MRNA]</scope>
    <source>
        <tissue>Kidney</tissue>
    </source>
</reference>
<evidence type="ECO:0000250" key="1">
    <source>
        <dbReference type="UniProtKB" id="P05198"/>
    </source>
</evidence>
<evidence type="ECO:0000250" key="2">
    <source>
        <dbReference type="UniProtKB" id="P32481"/>
    </source>
</evidence>
<evidence type="ECO:0000250" key="3">
    <source>
        <dbReference type="UniProtKB" id="P41091"/>
    </source>
</evidence>
<evidence type="ECO:0000250" key="4">
    <source>
        <dbReference type="UniProtKB" id="Q09130"/>
    </source>
</evidence>
<evidence type="ECO:0000250" key="5">
    <source>
        <dbReference type="UniProtKB" id="Q9Z0N1"/>
    </source>
</evidence>
<evidence type="ECO:0000255" key="6">
    <source>
        <dbReference type="PROSITE-ProRule" id="PRU01059"/>
    </source>
</evidence>
<accession>Q5R797</accession>
<gene>
    <name type="primary">EIF2S3</name>
</gene>
<feature type="initiator methionine" description="Removed" evidence="3">
    <location>
        <position position="1"/>
    </location>
</feature>
<feature type="chain" id="PRO_0000290338" description="Eukaryotic translation initiation factor 2 subunit 3">
    <location>
        <begin position="2"/>
        <end position="472"/>
    </location>
</feature>
<feature type="domain" description="tr-type G" evidence="6">
    <location>
        <begin position="39"/>
        <end position="248"/>
    </location>
</feature>
<feature type="region of interest" description="G1" evidence="6">
    <location>
        <begin position="48"/>
        <end position="55"/>
    </location>
</feature>
<feature type="region of interest" description="G2" evidence="6">
    <location>
        <begin position="76"/>
        <end position="80"/>
    </location>
</feature>
<feature type="region of interest" description="G3" evidence="6">
    <location>
        <begin position="134"/>
        <end position="137"/>
    </location>
</feature>
<feature type="region of interest" description="G4" evidence="6">
    <location>
        <begin position="190"/>
        <end position="193"/>
    </location>
</feature>
<feature type="region of interest" description="G5" evidence="6">
    <location>
        <begin position="225"/>
        <end position="227"/>
    </location>
</feature>
<feature type="region of interest" description="Interacts with CDC123" evidence="3">
    <location>
        <begin position="457"/>
        <end position="469"/>
    </location>
</feature>
<feature type="binding site" evidence="2">
    <location>
        <begin position="51"/>
        <end position="56"/>
    </location>
    <ligand>
        <name>GTP</name>
        <dbReference type="ChEBI" id="CHEBI:37565"/>
    </ligand>
</feature>
<feature type="binding site" evidence="2">
    <location>
        <begin position="190"/>
        <end position="193"/>
    </location>
    <ligand>
        <name>GTP</name>
        <dbReference type="ChEBI" id="CHEBI:37565"/>
    </ligand>
</feature>
<feature type="binding site" evidence="2">
    <location>
        <begin position="225"/>
        <end position="227"/>
    </location>
    <ligand>
        <name>GTP</name>
        <dbReference type="ChEBI" id="CHEBI:37565"/>
    </ligand>
</feature>
<feature type="modified residue" description="N-acetylalanine" evidence="3">
    <location>
        <position position="2"/>
    </location>
</feature>
<feature type="modified residue" description="Phosphoserine" evidence="5">
    <location>
        <position position="16"/>
    </location>
</feature>
<protein>
    <recommendedName>
        <fullName>Eukaryotic translation initiation factor 2 subunit 3</fullName>
        <ecNumber evidence="2">3.6.5.3</ecNumber>
    </recommendedName>
    <alternativeName>
        <fullName>Eukaryotic translation initiation factor 2 subunit gamma</fullName>
        <shortName>eIF2-gamma</shortName>
    </alternativeName>
</protein>